<evidence type="ECO:0000250" key="1">
    <source>
        <dbReference type="UniProtKB" id="Q39140"/>
    </source>
</evidence>
<evidence type="ECO:0000255" key="2">
    <source>
        <dbReference type="PROSITE-ProRule" id="PRU00768"/>
    </source>
</evidence>
<evidence type="ECO:0000255" key="3">
    <source>
        <dbReference type="PROSITE-ProRule" id="PRU00978"/>
    </source>
</evidence>
<evidence type="ECO:0000255" key="4">
    <source>
        <dbReference type="PROSITE-ProRule" id="PRU01147"/>
    </source>
</evidence>
<evidence type="ECO:0000256" key="5">
    <source>
        <dbReference type="SAM" id="MobiDB-lite"/>
    </source>
</evidence>
<evidence type="ECO:0000269" key="6">
    <source>
    </source>
</evidence>
<evidence type="ECO:0000269" key="7">
    <source>
    </source>
</evidence>
<evidence type="ECO:0000269" key="8">
    <source>
    </source>
</evidence>
<evidence type="ECO:0000303" key="9">
    <source>
    </source>
</evidence>
<evidence type="ECO:0000303" key="10">
    <source>
    </source>
</evidence>
<evidence type="ECO:0000305" key="11"/>
<evidence type="ECO:0000312" key="12">
    <source>
        <dbReference type="Araport" id="AT5G06839"/>
    </source>
</evidence>
<evidence type="ECO:0000312" key="13">
    <source>
        <dbReference type="EMBL" id="BAB11142.1"/>
    </source>
</evidence>
<comment type="function">
    <text evidence="7 8">Together with TGA9, basic leucine-zipper transcription factor required for anther development, probably via the activation of SPL expression in anthers and via the regulation of genes with functions in early and middle tapetal development (PubMed:20805327). Required for signaling responses to pathogen-associated molecular patterns (PAMPs) such as flg22 that involves chloroplastic reactive oxygen species (ROS) production and subsequent expression of H(2)O(2)-responsive genes (PubMed:27717447).</text>
</comment>
<comment type="subunit">
    <text evidence="1 6 7">Homodimer (PubMed:16731568). Binds DNA as a dimer (By similarity). Interacts with floral glutaredoxins GRXC7/ROXY1 and GRXC8/ROXY2 in the nucleus (PubMed:20805327). Interacts with TGA1, TGA2, TGA3, TGA4, TGA5, TGA6, TGA7, TGA9 and PAN (PubMed:16731568).</text>
</comment>
<comment type="subcellular location">
    <subcellularLocation>
        <location evidence="2 3 7">Nucleus</location>
    </subcellularLocation>
</comment>
<comment type="alternative products">
    <event type="alternative splicing"/>
    <isoform>
        <id>E3VNM4-1</id>
        <name>1</name>
        <sequence type="displayed"/>
    </isoform>
    <isoform>
        <id>E3VNM4-2</id>
        <name>2</name>
        <sequence type="described" ref="VSP_058777"/>
    </isoform>
    <text evidence="11">Additional isoforms seem to exist.</text>
</comment>
<comment type="tissue specificity">
    <text evidence="7">Expressed at low levels in inflorescence apex and flowers.</text>
</comment>
<comment type="developmental stage">
    <text evidence="7">During anther development, accumulates in anther primordia during archesporial cell specification and later present in a horseshoe pattern associated with the lateral and adaxial portion of primordia, prior to the emergence of distinct locules. Expressed throughout sporogenic tissue and surrounding cells layers in adaxial and adaxial locules. Localized to the tapetum and middle layers, gradually fading postmeiosis with degeneration of these cell layers.</text>
</comment>
<comment type="induction">
    <text evidence="8">Strongly induced by flg22 in leaves.</text>
</comment>
<comment type="disruption phenotype">
    <text evidence="7 8">In the double mutant tga9 tga10, reduced male fertility due to defects in male gametogenesis, with early steps in anther development blocked in adaxial lobes and later steps affected in abaxial lobes. Microspore development in abaxial anther lobes leads to the production of inviable pollen grains contained within nondehiscent anthers. In addition, multiple defects in the anther dehiscence program are observed, including abnormal stability and lignification of the middle layer and defects in septum and stomium function. Reduced SPL levels in anthers (PubMed:20805327). Increased sensitivity to flg22 treatment associated with a lack of chloroplastic H(2)O(2)-responsive genes; this phenotype is enhanced in the double mutant tga9 tga10 (PubMed:27717447).</text>
</comment>
<comment type="similarity">
    <text evidence="11">Belongs to the bZIP family.</text>
</comment>
<comment type="sequence caution" evidence="11">
    <conflict type="erroneous gene model prediction">
        <sequence resource="EMBL-CDS" id="BAB11142"/>
    </conflict>
</comment>
<proteinExistence type="evidence at protein level"/>
<name>TGA10_ARATH</name>
<reference key="1">
    <citation type="journal article" date="2002" name="Trends Plant Sci.">
        <title>bZIP transcription factors in Arabidopsis.</title>
        <authorList>
            <person name="Jakoby M."/>
            <person name="Weisshaar B."/>
            <person name="Droege-Laser W."/>
            <person name="Vicente-Carbajosa J."/>
            <person name="Tiedemann J."/>
            <person name="Kroj T."/>
            <person name="Parcy F."/>
        </authorList>
    </citation>
    <scope>NUCLEOTIDE SEQUENCE [MRNA] (ISOFORM 2)</scope>
    <scope>GENE FAMILY</scope>
    <scope>NOMENCLATURE</scope>
    <source>
        <strain>cv. Columbia</strain>
    </source>
</reference>
<reference key="2">
    <citation type="journal article" date="2010" name="Plant Physiol.">
        <title>Arabidopsis basic leucine-zipper transcription factors TGA9 and TGA10 interact with floral glutaredoxins ROXY1 and ROXY2 and are redundantly required for anther development.</title>
        <authorList>
            <person name="Murmu J."/>
            <person name="Bush M.J."/>
            <person name="Delong C."/>
            <person name="Li S."/>
            <person name="Xu M."/>
            <person name="Khan M."/>
            <person name="Malcolmson C."/>
            <person name="Fobert P.R."/>
            <person name="Zachgo S."/>
            <person name="Hepworth S.R."/>
        </authorList>
    </citation>
    <scope>NUCLEOTIDE SEQUENCE [MRNA]</scope>
    <scope>FUNCTION</scope>
    <scope>DISRUPTION PHENOTYPE</scope>
    <scope>INTERACTION WITH GRXC7/ROXY1 AND GRXC8/ROXY2</scope>
    <scope>DEVELOPMENTAL STAGE</scope>
    <scope>TISSUE SPECIFICITY</scope>
    <scope>SUBCELLULAR LOCATION</scope>
    <source>
        <strain>cv. Columbia</strain>
    </source>
</reference>
<reference key="3">
    <citation type="journal article" date="1998" name="DNA Res.">
        <title>Structural analysis of Arabidopsis thaliana chromosome 5. V. Sequence features of the regions of 1,381,565 bp covered by twenty one physically assigned P1 and TAC clones.</title>
        <authorList>
            <person name="Kaneko T."/>
            <person name="Kotani H."/>
            <person name="Nakamura Y."/>
            <person name="Sato S."/>
            <person name="Asamizu E."/>
            <person name="Miyajima N."/>
            <person name="Tabata S."/>
        </authorList>
    </citation>
    <scope>NUCLEOTIDE SEQUENCE [LARGE SCALE GENOMIC DNA]</scope>
    <source>
        <strain>cv. Columbia</strain>
    </source>
</reference>
<reference key="4">
    <citation type="journal article" date="2017" name="Plant J.">
        <title>Araport11: a complete reannotation of the Arabidopsis thaliana reference genome.</title>
        <authorList>
            <person name="Cheng C.Y."/>
            <person name="Krishnakumar V."/>
            <person name="Chan A.P."/>
            <person name="Thibaud-Nissen F."/>
            <person name="Schobel S."/>
            <person name="Town C.D."/>
        </authorList>
    </citation>
    <scope>GENOME REANNOTATION</scope>
    <source>
        <strain>cv. Columbia</strain>
    </source>
</reference>
<reference key="5">
    <citation type="journal article" date="2006" name="Mol. Biol. Evol.">
        <title>Cross-species annotation of basic leucine zipper factor interactions: Insight into the evolution of closed interaction networks.</title>
        <authorList>
            <person name="Deppmann C.D."/>
            <person name="Alvania R.S."/>
            <person name="Taparowsky E.J."/>
        </authorList>
    </citation>
    <scope>HOMODIMERIZATION</scope>
    <scope>INTERACTION WITH TGA1; TGA2; TGA3; TGA4; TGA5; TGA6; TGA7; TGA9 AND PAN</scope>
</reference>
<reference key="6">
    <citation type="journal article" date="2016" name="Plant Sci.">
        <title>Arabidopsis clade IV TGA transcription factors, TGA10 and TGA9, are involved in ROS-mediated responses to bacterial PAMP flg22.</title>
        <authorList>
            <person name="Noshi M."/>
            <person name="Mori D."/>
            <person name="Tanabe N."/>
            <person name="Maruta T."/>
            <person name="Shigeoka S."/>
        </authorList>
    </citation>
    <scope>FUNCTION</scope>
    <scope>DISRUPTION PHENOTYPE</scope>
    <scope>INDUCTION BY FLG22</scope>
    <source>
        <strain>cv. Columbia</strain>
    </source>
</reference>
<protein>
    <recommendedName>
        <fullName evidence="10">Transcription factor TGA10</fullName>
    </recommendedName>
    <alternativeName>
        <fullName evidence="10">Protein TGACG (TGA) motif-binding protein 10</fullName>
    </alternativeName>
    <alternativeName>
        <fullName evidence="9">bZIP transcription factor 65</fullName>
        <shortName evidence="9">AtbZIP65</shortName>
    </alternativeName>
</protein>
<organism>
    <name type="scientific">Arabidopsis thaliana</name>
    <name type="common">Mouse-ear cress</name>
    <dbReference type="NCBI Taxonomy" id="3702"/>
    <lineage>
        <taxon>Eukaryota</taxon>
        <taxon>Viridiplantae</taxon>
        <taxon>Streptophyta</taxon>
        <taxon>Embryophyta</taxon>
        <taxon>Tracheophyta</taxon>
        <taxon>Spermatophyta</taxon>
        <taxon>Magnoliopsida</taxon>
        <taxon>eudicotyledons</taxon>
        <taxon>Gunneridae</taxon>
        <taxon>Pentapetalae</taxon>
        <taxon>rosids</taxon>
        <taxon>malvids</taxon>
        <taxon>Brassicales</taxon>
        <taxon>Brassicaceae</taxon>
        <taxon>Camelineae</taxon>
        <taxon>Arabidopsis</taxon>
    </lineage>
</organism>
<dbReference type="EMBL" id="AJ314787">
    <property type="protein sequence ID" value="CAC40649.1"/>
    <property type="molecule type" value="mRNA"/>
</dbReference>
<dbReference type="EMBL" id="HQ132742">
    <property type="protein sequence ID" value="ADO95299.1"/>
    <property type="molecule type" value="mRNA"/>
</dbReference>
<dbReference type="EMBL" id="AB010697">
    <property type="protein sequence ID" value="BAB11142.1"/>
    <property type="status" value="ALT_SEQ"/>
    <property type="molecule type" value="Genomic_DNA"/>
</dbReference>
<dbReference type="EMBL" id="CP002688">
    <property type="protein sequence ID" value="AED91072.1"/>
    <property type="molecule type" value="Genomic_DNA"/>
</dbReference>
<dbReference type="EMBL" id="CP002688">
    <property type="protein sequence ID" value="AED91074.1"/>
    <property type="molecule type" value="Genomic_DNA"/>
</dbReference>
<dbReference type="RefSeq" id="NP_001190244.1">
    <molecule id="E3VNM4-1"/>
    <property type="nucleotide sequence ID" value="NM_001203315.2"/>
</dbReference>
<dbReference type="RefSeq" id="NP_850784.1">
    <molecule id="E3VNM4-2"/>
    <property type="nucleotide sequence ID" value="NM_180453.2"/>
</dbReference>
<dbReference type="SMR" id="E3VNM4"/>
<dbReference type="FunCoup" id="E3VNM4">
    <property type="interactions" value="291"/>
</dbReference>
<dbReference type="STRING" id="3702.E3VNM4"/>
<dbReference type="iPTMnet" id="E3VNM4"/>
<dbReference type="PaxDb" id="3702-AT5G06839.3"/>
<dbReference type="ProteomicsDB" id="246399">
    <molecule id="E3VNM4-1"/>
</dbReference>
<dbReference type="EnsemblPlants" id="AT5G06839.1">
    <molecule id="E3VNM4-2"/>
    <property type="protein sequence ID" value="AT5G06839.1"/>
    <property type="gene ID" value="AT5G06839"/>
</dbReference>
<dbReference type="EnsemblPlants" id="AT5G06839.3">
    <molecule id="E3VNM4-1"/>
    <property type="protein sequence ID" value="AT5G06839.3"/>
    <property type="gene ID" value="AT5G06839"/>
</dbReference>
<dbReference type="GeneID" id="830575"/>
<dbReference type="Gramene" id="AT5G06839.1">
    <molecule id="E3VNM4-2"/>
    <property type="protein sequence ID" value="AT5G06839.1"/>
    <property type="gene ID" value="AT5G06839"/>
</dbReference>
<dbReference type="Gramene" id="AT5G06839.3">
    <molecule id="E3VNM4-1"/>
    <property type="protein sequence ID" value="AT5G06839.3"/>
    <property type="gene ID" value="AT5G06839"/>
</dbReference>
<dbReference type="KEGG" id="ath:AT5G06839"/>
<dbReference type="Araport" id="AT5G06839"/>
<dbReference type="TAIR" id="AT5G06839">
    <property type="gene designation" value="TGA10"/>
</dbReference>
<dbReference type="eggNOG" id="ENOG502QRKF">
    <property type="taxonomic scope" value="Eukaryota"/>
</dbReference>
<dbReference type="HOGENOM" id="CLU_024782_0_2_1"/>
<dbReference type="InParanoid" id="E3VNM4"/>
<dbReference type="PRO" id="PR:E3VNM4"/>
<dbReference type="Proteomes" id="UP000006548">
    <property type="component" value="Chromosome 5"/>
</dbReference>
<dbReference type="ExpressionAtlas" id="E3VNM4">
    <property type="expression patterns" value="baseline and differential"/>
</dbReference>
<dbReference type="GO" id="GO:0005634">
    <property type="term" value="C:nucleus"/>
    <property type="evidence" value="ECO:0000314"/>
    <property type="project" value="UniProtKB"/>
</dbReference>
<dbReference type="GO" id="GO:0003700">
    <property type="term" value="F:DNA-binding transcription factor activity"/>
    <property type="evidence" value="ECO:0000250"/>
    <property type="project" value="TAIR"/>
</dbReference>
<dbReference type="GO" id="GO:0042803">
    <property type="term" value="F:protein homodimerization activity"/>
    <property type="evidence" value="ECO:0000314"/>
    <property type="project" value="UniProtKB"/>
</dbReference>
<dbReference type="GO" id="GO:0000976">
    <property type="term" value="F:transcription cis-regulatory region binding"/>
    <property type="evidence" value="ECO:0000353"/>
    <property type="project" value="TAIR"/>
</dbReference>
<dbReference type="GO" id="GO:0048653">
    <property type="term" value="P:anther development"/>
    <property type="evidence" value="ECO:0000315"/>
    <property type="project" value="UniProtKB"/>
</dbReference>
<dbReference type="GO" id="GO:0006351">
    <property type="term" value="P:DNA-templated transcription"/>
    <property type="evidence" value="ECO:0007669"/>
    <property type="project" value="InterPro"/>
</dbReference>
<dbReference type="GO" id="GO:0071588">
    <property type="term" value="P:hydrogen peroxide mediated signaling pathway"/>
    <property type="evidence" value="ECO:0000315"/>
    <property type="project" value="UniProtKB"/>
</dbReference>
<dbReference type="GO" id="GO:0002237">
    <property type="term" value="P:response to molecule of bacterial origin"/>
    <property type="evidence" value="ECO:0000315"/>
    <property type="project" value="UniProtKB"/>
</dbReference>
<dbReference type="CDD" id="cd14708">
    <property type="entry name" value="bZIP_HBP1b-like"/>
    <property type="match status" value="1"/>
</dbReference>
<dbReference type="FunFam" id="1.20.5.170:FF:000019">
    <property type="entry name" value="BZIP family transcription factor"/>
    <property type="match status" value="1"/>
</dbReference>
<dbReference type="Gene3D" id="1.20.5.170">
    <property type="match status" value="1"/>
</dbReference>
<dbReference type="InterPro" id="IPR004827">
    <property type="entry name" value="bZIP"/>
</dbReference>
<dbReference type="InterPro" id="IPR046347">
    <property type="entry name" value="bZIP_sf"/>
</dbReference>
<dbReference type="InterPro" id="IPR025422">
    <property type="entry name" value="TGA_domain"/>
</dbReference>
<dbReference type="PANTHER" id="PTHR45693:SF13">
    <property type="entry name" value="TRANSCRIPTION FACTOR TGA10"/>
    <property type="match status" value="1"/>
</dbReference>
<dbReference type="PANTHER" id="PTHR45693">
    <property type="entry name" value="TRANSCRIPTION FACTOR TGA9"/>
    <property type="match status" value="1"/>
</dbReference>
<dbReference type="Pfam" id="PF00170">
    <property type="entry name" value="bZIP_1"/>
    <property type="match status" value="1"/>
</dbReference>
<dbReference type="Pfam" id="PF14144">
    <property type="entry name" value="DOG1"/>
    <property type="match status" value="1"/>
</dbReference>
<dbReference type="SMART" id="SM00338">
    <property type="entry name" value="BRLZ"/>
    <property type="match status" value="1"/>
</dbReference>
<dbReference type="SUPFAM" id="SSF57959">
    <property type="entry name" value="Leucine zipper domain"/>
    <property type="match status" value="1"/>
</dbReference>
<dbReference type="PROSITE" id="PS50217">
    <property type="entry name" value="BZIP"/>
    <property type="match status" value="1"/>
</dbReference>
<dbReference type="PROSITE" id="PS00036">
    <property type="entry name" value="BZIP_BASIC"/>
    <property type="match status" value="1"/>
</dbReference>
<dbReference type="PROSITE" id="PS51806">
    <property type="entry name" value="DOG1"/>
    <property type="match status" value="1"/>
</dbReference>
<keyword id="KW-0010">Activator</keyword>
<keyword id="KW-0025">Alternative splicing</keyword>
<keyword id="KW-0238">DNA-binding</keyword>
<keyword id="KW-0539">Nucleus</keyword>
<keyword id="KW-1185">Reference proteome</keyword>
<keyword id="KW-0804">Transcription</keyword>
<keyword id="KW-0805">Transcription regulation</keyword>
<gene>
    <name evidence="10" type="primary">TGA10</name>
    <name evidence="9" type="synonym">BZIP65</name>
    <name evidence="12" type="ordered locus">At5g06839</name>
    <name evidence="13" type="ORF">MOJ9.1</name>
</gene>
<accession>E3VNM4</accession>
<accession>F4K593</accession>
<accession>Q93XM5</accession>
<accession>Q9FL60</accession>
<sequence length="460" mass="51167">MQGHHQNHHQHLSSSSATSSHGNFMNKDGYDIGEIDPSLFLYLDGQGHHDPPSTAPSPLHHHHTTQNLAMRPPTSTLNIFPSQPMHIEPPPSSTHNTDNTRLVPAAQPSGSTRPASDPSMDLTNHSQFHQPPQGSKSIKKEGNRKGLASSDHDIPKSSDPKTLRRLAQNREAARKSRLRKKAYVQQLESCRIKLTQLEQEIQRARSQGVFFGGSLIGGDQQQGGLPIGPGNISSEAAVFDMEYARWLEEQQRLLNELRVATQEHLSENELRMFVDTCLAHYDHLINLKAMVAKTDVFHLISGAWKTPAERCFLWMGGFRPSEIIKVIVNQIEPLTEQQIVGICGLQQSTQEAEEALSQGLEALNQSLSDSIVSDSLPPASAPLPPHLSNFMSHMSLALNKLSALEGFVLQADNLRHQTIHRLNQLLTTRQEARCLLAVAEYFHRLQALSSLWLARPRQDG</sequence>
<feature type="chain" id="PRO_0000438994" description="Transcription factor TGA10">
    <location>
        <begin position="1"/>
        <end position="460"/>
    </location>
</feature>
<feature type="domain" description="bZIP" evidence="3">
    <location>
        <begin position="159"/>
        <end position="203"/>
    </location>
</feature>
<feature type="domain" description="DOG1" evidence="4">
    <location>
        <begin position="236"/>
        <end position="455"/>
    </location>
</feature>
<feature type="region of interest" description="Disordered" evidence="5">
    <location>
        <begin position="1"/>
        <end position="29"/>
    </location>
</feature>
<feature type="region of interest" description="Disordered" evidence="5">
    <location>
        <begin position="43"/>
        <end position="163"/>
    </location>
</feature>
<feature type="region of interest" description="Basic motif" evidence="3">
    <location>
        <begin position="161"/>
        <end position="181"/>
    </location>
</feature>
<feature type="region of interest" description="Leucine-zipper" evidence="3">
    <location>
        <begin position="187"/>
        <end position="201"/>
    </location>
</feature>
<feature type="short sequence motif" description="Nuclear localization signal" evidence="2">
    <location>
        <begin position="163"/>
        <end position="170"/>
    </location>
</feature>
<feature type="compositionally biased region" description="Basic residues" evidence="5">
    <location>
        <begin position="1"/>
        <end position="11"/>
    </location>
</feature>
<feature type="compositionally biased region" description="Low complexity" evidence="5">
    <location>
        <begin position="12"/>
        <end position="21"/>
    </location>
</feature>
<feature type="compositionally biased region" description="Polar residues" evidence="5">
    <location>
        <begin position="65"/>
        <end position="81"/>
    </location>
</feature>
<feature type="compositionally biased region" description="Polar residues" evidence="5">
    <location>
        <begin position="121"/>
        <end position="136"/>
    </location>
</feature>
<feature type="compositionally biased region" description="Basic and acidic residues" evidence="5">
    <location>
        <begin position="138"/>
        <end position="162"/>
    </location>
</feature>
<feature type="splice variant" id="VSP_058777" description="In isoform 2.">
    <location>
        <begin position="97"/>
        <end position="139"/>
    </location>
</feature>
<feature type="sequence conflict" description="In Ref. 1; CAC40649." evidence="11" ref="1">
    <original>S</original>
    <variation>F</variation>
    <location>
        <position position="395"/>
    </location>
</feature>